<reference key="1">
    <citation type="journal article" date="2005" name="Infect. Immun.">
        <title>Comparative genomic analysis of Chlamydia trachomatis oculotropic and genitotropic strains.</title>
        <authorList>
            <person name="Carlson J.H."/>
            <person name="Porcella S.F."/>
            <person name="McClarty G."/>
            <person name="Caldwell H.D."/>
        </authorList>
    </citation>
    <scope>NUCLEOTIDE SEQUENCE [LARGE SCALE GENOMIC DNA]</scope>
    <source>
        <strain>ATCC VR-571B / DSM 19440 / HAR-13</strain>
    </source>
</reference>
<sequence>MFREGSRDDAALVKEGLFDKLEIGIASDVTIRDKWSCGEIKKPETINYRTFKPEKGGLFCEKIFGPTKDWECYCGKYKKIKHKGIVCDRCGVEVTLSKVRRERMAHIELAVPIVHIWFFKTTPSRIGNVLGMTASDLERVIYYEEYVVIDPGNTDLVKKQLLNDAKYREVVEKWGKDAFVAKMGGEAVYDLLKSEDLESLLGELKERLRKTKSQQARMKLAKRLKIVEGFVSSSNRPEWMVLKNIPVVPPDLRPLVPLDGGRFATSDLNDLYRRVINRNNRLKAILRLKTPEVIVRNEKRMLQEAVDALFDNGRHGHPVMGAGNRPLKSLSEMLKGKNGRFRQNLLGKRVDYSGRSVIIVGPELKFNQCGLPKEMALELFEPFIIKRLKDQGSVYTIRSAKKMIQRGAPEVWDVLEEIIKGHPVLLNRAPTLHRLGIQAFEPVLIEGKAIRVHPLVCAAFNADFDGDQMAVHVPLSIEAQLEAKVLMMAPDNIFLPSSGKPVATPSKDMTLGIYYLMADPTYFPEEHGGKTKAFKDEVEVLRALNAGGFILKDEICGSRRDETGRGIHIHEKIKVRIDGQIIETTPGRVFFNTIVPKELGFQNYSMPSKRISELILQCYKKVGLEATVRFLDDLKELGFVQSTKAAISMGLKDVKIPEIKKEILKDAYDKVAVVKKQYEDGIITDGERHSKTISIWTEVSDLLSNALYSEIKKQTNSKHNPLFLMIDSGARGNKSQLKQLGALRGLMAKPNGAIIESPITSNFREGLTVLEYSISSHGARKGLADTALKTADSGYLTRRLVDVAQDVIITERDCGTLNHIEVSTIRQGSEELLPLKDRVYGRTVSENIYQPGDKSNVLAYAGDVLTSAQAEAIDDAGIESVKIRSTLTCESRRGVCAKCYGLNLANGRLIGLGEAVGIIAAQSIGEPGTQLTMRTFHLGGIAATSSTPEIVAECDGILVYLDLRVVVDQEGNNLVLNKMGALHLVQDEGRSLSEYKKLLSTKSIESLATFPVELGAKILVNDGAAVAAGQRIAEVELHNIPIICDKPGFVHYEDLVEGVSTEKVTNKNTGLVELIVKQHRGELHPQIAIYADANMKELVGTYAIPSGAIISVEEGQRIAPGMLLARLPRGAIKTKDITGGLPRVAELVEARKPEDAADIAKIDGVVDFKGIQKNKRILVVRDEITGMEEEHLISLTKHLIVQRGDSVIKGQQLTDGLVVPHEILEICGVRELQKYLVNEVQEVYRLQGVDINDKHVEIIVRQMLQKVRITDPGDTTLLFGEDVDKKEFYEENRRTEEDGGKPAQAVPVLLGITKASLGTESFISAASFQDTTRVLTDAACSSKTDYLLGFKENVIMGHMIPGGTGFDTHKRIKQHLEKEQEDLVFDFDSEFESVAG</sequence>
<evidence type="ECO:0000255" key="1">
    <source>
        <dbReference type="HAMAP-Rule" id="MF_01322"/>
    </source>
</evidence>
<protein>
    <recommendedName>
        <fullName evidence="1">DNA-directed RNA polymerase subunit beta'</fullName>
        <shortName evidence="1">RNAP subunit beta'</shortName>
        <ecNumber evidence="1">2.7.7.6</ecNumber>
    </recommendedName>
    <alternativeName>
        <fullName evidence="1">RNA polymerase subunit beta'</fullName>
    </alternativeName>
    <alternativeName>
        <fullName evidence="1">Transcriptase subunit beta'</fullName>
    </alternativeName>
</protein>
<name>RPOC_CHLTA</name>
<dbReference type="EC" id="2.7.7.6" evidence="1"/>
<dbReference type="EMBL" id="CP000051">
    <property type="protein sequence ID" value="AAX50574.1"/>
    <property type="molecule type" value="Genomic_DNA"/>
</dbReference>
<dbReference type="RefSeq" id="WP_009871661.1">
    <property type="nucleotide sequence ID" value="NC_007429.1"/>
</dbReference>
<dbReference type="SMR" id="Q3KM48"/>
<dbReference type="KEGG" id="cta:CTA_0336"/>
<dbReference type="HOGENOM" id="CLU_000524_3_1_0"/>
<dbReference type="Proteomes" id="UP000002532">
    <property type="component" value="Chromosome"/>
</dbReference>
<dbReference type="GO" id="GO:0000428">
    <property type="term" value="C:DNA-directed RNA polymerase complex"/>
    <property type="evidence" value="ECO:0007669"/>
    <property type="project" value="UniProtKB-KW"/>
</dbReference>
<dbReference type="GO" id="GO:0003677">
    <property type="term" value="F:DNA binding"/>
    <property type="evidence" value="ECO:0007669"/>
    <property type="project" value="UniProtKB-UniRule"/>
</dbReference>
<dbReference type="GO" id="GO:0003899">
    <property type="term" value="F:DNA-directed RNA polymerase activity"/>
    <property type="evidence" value="ECO:0007669"/>
    <property type="project" value="UniProtKB-UniRule"/>
</dbReference>
<dbReference type="GO" id="GO:0000287">
    <property type="term" value="F:magnesium ion binding"/>
    <property type="evidence" value="ECO:0007669"/>
    <property type="project" value="UniProtKB-UniRule"/>
</dbReference>
<dbReference type="GO" id="GO:0008270">
    <property type="term" value="F:zinc ion binding"/>
    <property type="evidence" value="ECO:0007669"/>
    <property type="project" value="UniProtKB-UniRule"/>
</dbReference>
<dbReference type="GO" id="GO:0006351">
    <property type="term" value="P:DNA-templated transcription"/>
    <property type="evidence" value="ECO:0007669"/>
    <property type="project" value="UniProtKB-UniRule"/>
</dbReference>
<dbReference type="CDD" id="cd02655">
    <property type="entry name" value="RNAP_beta'_C"/>
    <property type="match status" value="1"/>
</dbReference>
<dbReference type="CDD" id="cd01609">
    <property type="entry name" value="RNAP_beta'_N"/>
    <property type="match status" value="1"/>
</dbReference>
<dbReference type="Gene3D" id="1.10.132.30">
    <property type="match status" value="1"/>
</dbReference>
<dbReference type="Gene3D" id="1.10.150.390">
    <property type="match status" value="1"/>
</dbReference>
<dbReference type="Gene3D" id="1.10.1790.20">
    <property type="match status" value="1"/>
</dbReference>
<dbReference type="Gene3D" id="1.10.40.90">
    <property type="match status" value="1"/>
</dbReference>
<dbReference type="Gene3D" id="2.40.40.20">
    <property type="match status" value="1"/>
</dbReference>
<dbReference type="Gene3D" id="2.40.50.100">
    <property type="match status" value="3"/>
</dbReference>
<dbReference type="Gene3D" id="4.10.860.120">
    <property type="entry name" value="RNA polymerase II, clamp domain"/>
    <property type="match status" value="1"/>
</dbReference>
<dbReference type="Gene3D" id="1.10.274.100">
    <property type="entry name" value="RNA polymerase Rpb1, domain 3"/>
    <property type="match status" value="1"/>
</dbReference>
<dbReference type="HAMAP" id="MF_01322">
    <property type="entry name" value="RNApol_bact_RpoC"/>
    <property type="match status" value="1"/>
</dbReference>
<dbReference type="InterPro" id="IPR045867">
    <property type="entry name" value="DNA-dir_RpoC_beta_prime"/>
</dbReference>
<dbReference type="InterPro" id="IPR012754">
    <property type="entry name" value="DNA-dir_RpoC_beta_prime_bact"/>
</dbReference>
<dbReference type="InterPro" id="IPR000722">
    <property type="entry name" value="RNA_pol_asu"/>
</dbReference>
<dbReference type="InterPro" id="IPR006592">
    <property type="entry name" value="RNA_pol_N"/>
</dbReference>
<dbReference type="InterPro" id="IPR007080">
    <property type="entry name" value="RNA_pol_Rpb1_1"/>
</dbReference>
<dbReference type="InterPro" id="IPR007066">
    <property type="entry name" value="RNA_pol_Rpb1_3"/>
</dbReference>
<dbReference type="InterPro" id="IPR042102">
    <property type="entry name" value="RNA_pol_Rpb1_3_sf"/>
</dbReference>
<dbReference type="InterPro" id="IPR007083">
    <property type="entry name" value="RNA_pol_Rpb1_4"/>
</dbReference>
<dbReference type="InterPro" id="IPR007081">
    <property type="entry name" value="RNA_pol_Rpb1_5"/>
</dbReference>
<dbReference type="InterPro" id="IPR044893">
    <property type="entry name" value="RNA_pol_Rpb1_clamp_domain"/>
</dbReference>
<dbReference type="InterPro" id="IPR038120">
    <property type="entry name" value="Rpb1_funnel_sf"/>
</dbReference>
<dbReference type="NCBIfam" id="TIGR02386">
    <property type="entry name" value="rpoC_TIGR"/>
    <property type="match status" value="1"/>
</dbReference>
<dbReference type="PANTHER" id="PTHR19376">
    <property type="entry name" value="DNA-DIRECTED RNA POLYMERASE"/>
    <property type="match status" value="1"/>
</dbReference>
<dbReference type="PANTHER" id="PTHR19376:SF54">
    <property type="entry name" value="DNA-DIRECTED RNA POLYMERASE SUBUNIT BETA"/>
    <property type="match status" value="1"/>
</dbReference>
<dbReference type="Pfam" id="PF04997">
    <property type="entry name" value="RNA_pol_Rpb1_1"/>
    <property type="match status" value="1"/>
</dbReference>
<dbReference type="Pfam" id="PF00623">
    <property type="entry name" value="RNA_pol_Rpb1_2"/>
    <property type="match status" value="1"/>
</dbReference>
<dbReference type="Pfam" id="PF04983">
    <property type="entry name" value="RNA_pol_Rpb1_3"/>
    <property type="match status" value="1"/>
</dbReference>
<dbReference type="Pfam" id="PF05000">
    <property type="entry name" value="RNA_pol_Rpb1_4"/>
    <property type="match status" value="1"/>
</dbReference>
<dbReference type="Pfam" id="PF04998">
    <property type="entry name" value="RNA_pol_Rpb1_5"/>
    <property type="match status" value="1"/>
</dbReference>
<dbReference type="SMART" id="SM00663">
    <property type="entry name" value="RPOLA_N"/>
    <property type="match status" value="1"/>
</dbReference>
<dbReference type="SUPFAM" id="SSF64484">
    <property type="entry name" value="beta and beta-prime subunits of DNA dependent RNA-polymerase"/>
    <property type="match status" value="1"/>
</dbReference>
<comment type="function">
    <text evidence="1">DNA-dependent RNA polymerase catalyzes the transcription of DNA into RNA using the four ribonucleoside triphosphates as substrates.</text>
</comment>
<comment type="catalytic activity">
    <reaction evidence="1">
        <text>RNA(n) + a ribonucleoside 5'-triphosphate = RNA(n+1) + diphosphate</text>
        <dbReference type="Rhea" id="RHEA:21248"/>
        <dbReference type="Rhea" id="RHEA-COMP:14527"/>
        <dbReference type="Rhea" id="RHEA-COMP:17342"/>
        <dbReference type="ChEBI" id="CHEBI:33019"/>
        <dbReference type="ChEBI" id="CHEBI:61557"/>
        <dbReference type="ChEBI" id="CHEBI:140395"/>
        <dbReference type="EC" id="2.7.7.6"/>
    </reaction>
</comment>
<comment type="cofactor">
    <cofactor evidence="1">
        <name>Mg(2+)</name>
        <dbReference type="ChEBI" id="CHEBI:18420"/>
    </cofactor>
    <text evidence="1">Binds 1 Mg(2+) ion per subunit.</text>
</comment>
<comment type="cofactor">
    <cofactor evidence="1">
        <name>Zn(2+)</name>
        <dbReference type="ChEBI" id="CHEBI:29105"/>
    </cofactor>
    <text evidence="1">Binds 2 Zn(2+) ions per subunit.</text>
</comment>
<comment type="subunit">
    <text evidence="1">The RNAP catalytic core consists of 2 alpha, 1 beta, 1 beta' and 1 omega subunit. When a sigma factor is associated with the core the holoenzyme is formed, which can initiate transcription.</text>
</comment>
<comment type="similarity">
    <text evidence="1">Belongs to the RNA polymerase beta' chain family.</text>
</comment>
<accession>Q3KM48</accession>
<proteinExistence type="inferred from homology"/>
<gene>
    <name evidence="1" type="primary">rpoC</name>
    <name type="ordered locus">CTA_0336</name>
</gene>
<feature type="chain" id="PRO_0000225523" description="DNA-directed RNA polymerase subunit beta'">
    <location>
        <begin position="1"/>
        <end position="1396"/>
    </location>
</feature>
<feature type="binding site" evidence="1">
    <location>
        <position position="72"/>
    </location>
    <ligand>
        <name>Zn(2+)</name>
        <dbReference type="ChEBI" id="CHEBI:29105"/>
        <label>1</label>
    </ligand>
</feature>
<feature type="binding site" evidence="1">
    <location>
        <position position="74"/>
    </location>
    <ligand>
        <name>Zn(2+)</name>
        <dbReference type="ChEBI" id="CHEBI:29105"/>
        <label>1</label>
    </ligand>
</feature>
<feature type="binding site" evidence="1">
    <location>
        <position position="87"/>
    </location>
    <ligand>
        <name>Zn(2+)</name>
        <dbReference type="ChEBI" id="CHEBI:29105"/>
        <label>1</label>
    </ligand>
</feature>
<feature type="binding site" evidence="1">
    <location>
        <position position="90"/>
    </location>
    <ligand>
        <name>Zn(2+)</name>
        <dbReference type="ChEBI" id="CHEBI:29105"/>
        <label>1</label>
    </ligand>
</feature>
<feature type="binding site" evidence="1">
    <location>
        <position position="463"/>
    </location>
    <ligand>
        <name>Mg(2+)</name>
        <dbReference type="ChEBI" id="CHEBI:18420"/>
    </ligand>
</feature>
<feature type="binding site" evidence="1">
    <location>
        <position position="465"/>
    </location>
    <ligand>
        <name>Mg(2+)</name>
        <dbReference type="ChEBI" id="CHEBI:18420"/>
    </ligand>
</feature>
<feature type="binding site" evidence="1">
    <location>
        <position position="467"/>
    </location>
    <ligand>
        <name>Mg(2+)</name>
        <dbReference type="ChEBI" id="CHEBI:18420"/>
    </ligand>
</feature>
<feature type="binding site" evidence="1">
    <location>
        <position position="814"/>
    </location>
    <ligand>
        <name>Zn(2+)</name>
        <dbReference type="ChEBI" id="CHEBI:29105"/>
        <label>2</label>
    </ligand>
</feature>
<feature type="binding site" evidence="1">
    <location>
        <position position="889"/>
    </location>
    <ligand>
        <name>Zn(2+)</name>
        <dbReference type="ChEBI" id="CHEBI:29105"/>
        <label>2</label>
    </ligand>
</feature>
<feature type="binding site" evidence="1">
    <location>
        <position position="896"/>
    </location>
    <ligand>
        <name>Zn(2+)</name>
        <dbReference type="ChEBI" id="CHEBI:29105"/>
        <label>2</label>
    </ligand>
</feature>
<feature type="binding site" evidence="1">
    <location>
        <position position="899"/>
    </location>
    <ligand>
        <name>Zn(2+)</name>
        <dbReference type="ChEBI" id="CHEBI:29105"/>
        <label>2</label>
    </ligand>
</feature>
<organism>
    <name type="scientific">Chlamydia trachomatis serovar A (strain ATCC VR-571B / DSM 19440 / HAR-13)</name>
    <dbReference type="NCBI Taxonomy" id="315277"/>
    <lineage>
        <taxon>Bacteria</taxon>
        <taxon>Pseudomonadati</taxon>
        <taxon>Chlamydiota</taxon>
        <taxon>Chlamydiia</taxon>
        <taxon>Chlamydiales</taxon>
        <taxon>Chlamydiaceae</taxon>
        <taxon>Chlamydia/Chlamydophila group</taxon>
        <taxon>Chlamydia</taxon>
    </lineage>
</organism>
<keyword id="KW-0240">DNA-directed RNA polymerase</keyword>
<keyword id="KW-0460">Magnesium</keyword>
<keyword id="KW-0479">Metal-binding</keyword>
<keyword id="KW-0548">Nucleotidyltransferase</keyword>
<keyword id="KW-0804">Transcription</keyword>
<keyword id="KW-0808">Transferase</keyword>
<keyword id="KW-0862">Zinc</keyword>